<feature type="chain" id="PRO_0000277119" description="Photosystem I P700 chlorophyll a apoprotein A2">
    <location>
        <begin position="1"/>
        <end position="734"/>
    </location>
</feature>
<feature type="transmembrane region" description="Helical; Name=I" evidence="1">
    <location>
        <begin position="46"/>
        <end position="69"/>
    </location>
</feature>
<feature type="transmembrane region" description="Helical; Name=II" evidence="1">
    <location>
        <begin position="135"/>
        <end position="158"/>
    </location>
</feature>
<feature type="transmembrane region" description="Helical; Name=III" evidence="1">
    <location>
        <begin position="175"/>
        <end position="199"/>
    </location>
</feature>
<feature type="transmembrane region" description="Helical; Name=IV" evidence="1">
    <location>
        <begin position="273"/>
        <end position="291"/>
    </location>
</feature>
<feature type="transmembrane region" description="Helical; Name=V" evidence="1">
    <location>
        <begin position="330"/>
        <end position="353"/>
    </location>
</feature>
<feature type="transmembrane region" description="Helical; Name=VI" evidence="1">
    <location>
        <begin position="369"/>
        <end position="395"/>
    </location>
</feature>
<feature type="transmembrane region" description="Helical; Name=VII" evidence="1">
    <location>
        <begin position="417"/>
        <end position="439"/>
    </location>
</feature>
<feature type="transmembrane region" description="Helical; Name=VIII" evidence="1">
    <location>
        <begin position="517"/>
        <end position="535"/>
    </location>
</feature>
<feature type="transmembrane region" description="Helical; Name=IX" evidence="1">
    <location>
        <begin position="575"/>
        <end position="596"/>
    </location>
</feature>
<feature type="transmembrane region" description="Helical; Name=X" evidence="1">
    <location>
        <begin position="643"/>
        <end position="665"/>
    </location>
</feature>
<feature type="transmembrane region" description="Helical; Name=XI" evidence="1">
    <location>
        <begin position="707"/>
        <end position="727"/>
    </location>
</feature>
<feature type="binding site" evidence="1">
    <location>
        <position position="559"/>
    </location>
    <ligand>
        <name>[4Fe-4S] cluster</name>
        <dbReference type="ChEBI" id="CHEBI:49883"/>
        <note>ligand shared between dimeric partners</note>
    </ligand>
</feature>
<feature type="binding site" evidence="1">
    <location>
        <position position="568"/>
    </location>
    <ligand>
        <name>[4Fe-4S] cluster</name>
        <dbReference type="ChEBI" id="CHEBI:49883"/>
        <note>ligand shared between dimeric partners</note>
    </ligand>
</feature>
<feature type="binding site" description="axial binding residue" evidence="1">
    <location>
        <position position="654"/>
    </location>
    <ligand>
        <name>chlorophyll a</name>
        <dbReference type="ChEBI" id="CHEBI:58416"/>
        <label>B1</label>
    </ligand>
    <ligandPart>
        <name>Mg</name>
        <dbReference type="ChEBI" id="CHEBI:25107"/>
    </ligandPart>
</feature>
<feature type="binding site" description="axial binding residue" evidence="1">
    <location>
        <position position="662"/>
    </location>
    <ligand>
        <name>chlorophyll a</name>
        <dbReference type="ChEBI" id="CHEBI:58416"/>
        <label>B3</label>
    </ligand>
    <ligandPart>
        <name>Mg</name>
        <dbReference type="ChEBI" id="CHEBI:25107"/>
    </ligandPart>
</feature>
<feature type="binding site" evidence="1">
    <location>
        <position position="670"/>
    </location>
    <ligand>
        <name>chlorophyll a</name>
        <dbReference type="ChEBI" id="CHEBI:58416"/>
        <label>B3</label>
    </ligand>
</feature>
<feature type="binding site" evidence="1">
    <location>
        <position position="671"/>
    </location>
    <ligand>
        <name>phylloquinone</name>
        <dbReference type="ChEBI" id="CHEBI:18067"/>
        <label>B</label>
    </ligand>
</feature>
<comment type="function">
    <text evidence="1">PsaA and PsaB bind P700, the primary electron donor of photosystem I (PSI), as well as the electron acceptors A0, A1 and FX. PSI is a plastocyanin-ferredoxin oxidoreductase, converting photonic excitation into a charge separation, which transfers an electron from the donor P700 chlorophyll pair to the spectroscopically characterized acceptors A0, A1, FX, FA and FB in turn. Oxidized P700 is reduced on the lumenal side of the thylakoid membrane by plastocyanin.</text>
</comment>
<comment type="catalytic activity">
    <reaction evidence="1">
        <text>reduced [plastocyanin] + hnu + oxidized [2Fe-2S]-[ferredoxin] = oxidized [plastocyanin] + reduced [2Fe-2S]-[ferredoxin]</text>
        <dbReference type="Rhea" id="RHEA:30407"/>
        <dbReference type="Rhea" id="RHEA-COMP:10000"/>
        <dbReference type="Rhea" id="RHEA-COMP:10001"/>
        <dbReference type="Rhea" id="RHEA-COMP:10039"/>
        <dbReference type="Rhea" id="RHEA-COMP:10040"/>
        <dbReference type="ChEBI" id="CHEBI:29036"/>
        <dbReference type="ChEBI" id="CHEBI:30212"/>
        <dbReference type="ChEBI" id="CHEBI:33737"/>
        <dbReference type="ChEBI" id="CHEBI:33738"/>
        <dbReference type="ChEBI" id="CHEBI:49552"/>
        <dbReference type="EC" id="1.97.1.12"/>
    </reaction>
</comment>
<comment type="cofactor">
    <text evidence="1">P700 is a chlorophyll a/chlorophyll a' dimer, A0 is one or more chlorophyll a, A1 is one or both phylloquinones and FX is a shared 4Fe-4S iron-sulfur center.</text>
</comment>
<comment type="subunit">
    <text evidence="1">The PsaA/B heterodimer binds the P700 chlorophyll special pair and subsequent electron acceptors. PSI consists of a core antenna complex that captures photons, and an electron transfer chain that converts photonic excitation into a charge separation. The eukaryotic PSI reaction center is composed of at least 11 subunits.</text>
</comment>
<comment type="subcellular location">
    <subcellularLocation>
        <location>Plastid</location>
        <location>Chloroplast thylakoid membrane</location>
        <topology>Multi-pass membrane protein</topology>
    </subcellularLocation>
</comment>
<comment type="similarity">
    <text evidence="1">Belongs to the PsaA/PsaB family.</text>
</comment>
<name>PSAB_LACSA</name>
<protein>
    <recommendedName>
        <fullName evidence="1">Photosystem I P700 chlorophyll a apoprotein A2</fullName>
        <ecNumber evidence="1">1.97.1.12</ecNumber>
    </recommendedName>
    <alternativeName>
        <fullName evidence="1">PSI-B</fullName>
    </alternativeName>
    <alternativeName>
        <fullName evidence="1">PsaB</fullName>
    </alternativeName>
</protein>
<gene>
    <name evidence="1" type="primary">psaB</name>
</gene>
<accession>Q332X9</accession>
<sequence length="734" mass="82448">MALRFPRFSQGLAQDPTTRRIWFGIATAHDFESHDDITEERLYQNIFASHFGQLAIIFLWTSGNLFHVAWQGNFESWVQDPLHVRPIAHAIWDPHFGQPAVEAFTRGGALGPVNIAYSGVYQWWYTIGLRTNEDLYTGALFLLLISAISLIAGWLHLQPKWKPSVSWFKNAESRLNHHLSGLFGVSSLAWTGHLVHVAIPASRGEYVRWNNFLDVLPHPQGLGPLFTGQWNLYAQNPDSGSHLFGTSQGAGTAILTLLGGFHPQTQSLWLTDMAHHHLAIAFLFLIAGHMYRTNFGIGHSMKDLLDAHIPPGGRLGRGHKGLYDTINNSLHFQLGLALASLGVITSLVAQHMYSLPAYAFIAQDFTTQAALYTHHQYIAGFIMTGAFAHGAIFFIRDYNPEQNEDNVLARMLEHKEAIISHLSWASLFLGFHTLGLYVHNDVMLAFGTPEKQILIEPIFAQWIQSAHGKTSYGFDILLSSTNGPAFNAGRSIWLPGWLNAINENSNSLFLTIGPGDFLVHHAIALGLHTTTLILVKGALDARGSKLMPDKKDFGYSFPCDGPGRGGTCDISAWDAFYLAVFWMLNTIGWVTFYWHWKHITLWQGNVSQFNESSTYLMGWLRDYLWLNSSQLINGYNPFGMNSLSVWAWMFLFGHLVWATGFMFLISWRGYWQELIETLAWAHERTPLANLIRWRDKPVALSIVQARLVGLAHFSVGYIFTYAAFLIASTSGKFG</sequence>
<organism>
    <name type="scientific">Lactuca sativa</name>
    <name type="common">Garden lettuce</name>
    <dbReference type="NCBI Taxonomy" id="4236"/>
    <lineage>
        <taxon>Eukaryota</taxon>
        <taxon>Viridiplantae</taxon>
        <taxon>Streptophyta</taxon>
        <taxon>Embryophyta</taxon>
        <taxon>Tracheophyta</taxon>
        <taxon>Spermatophyta</taxon>
        <taxon>Magnoliopsida</taxon>
        <taxon>eudicotyledons</taxon>
        <taxon>Gunneridae</taxon>
        <taxon>Pentapetalae</taxon>
        <taxon>asterids</taxon>
        <taxon>campanulids</taxon>
        <taxon>Asterales</taxon>
        <taxon>Asteraceae</taxon>
        <taxon>Cichorioideae</taxon>
        <taxon>Cichorieae</taxon>
        <taxon>Lactucinae</taxon>
        <taxon>Lactuca</taxon>
    </lineage>
</organism>
<evidence type="ECO:0000255" key="1">
    <source>
        <dbReference type="HAMAP-Rule" id="MF_00482"/>
    </source>
</evidence>
<dbReference type="EC" id="1.97.1.12" evidence="1"/>
<dbReference type="EMBL" id="AP007232">
    <property type="protein sequence ID" value="BAE47593.1"/>
    <property type="molecule type" value="Genomic_DNA"/>
</dbReference>
<dbReference type="EMBL" id="DQ383816">
    <property type="protein sequence ID" value="ABD47232.1"/>
    <property type="molecule type" value="Genomic_DNA"/>
</dbReference>
<dbReference type="RefSeq" id="YP_398328.1">
    <property type="nucleotide sequence ID" value="NC_007578.1"/>
</dbReference>
<dbReference type="SMR" id="Q332X9"/>
<dbReference type="EnsemblPlants" id="rna-gnl|WGS:NBSK|LSAT_1X5820_mrna">
    <property type="protein sequence ID" value="cds-PLY89787.1"/>
    <property type="gene ID" value="gene-LSAT_1X5820"/>
</dbReference>
<dbReference type="EnsemblPlants" id="rna-gnl|WGS:NBSK|LSAT_1X88101_mrna">
    <property type="protein sequence ID" value="cds-PLY71582.1"/>
    <property type="gene ID" value="gene-LSAT_1X88101"/>
</dbReference>
<dbReference type="EnsemblPlants" id="rna-gnl|WGS:NBSK|LSAT_4X147760_mrna">
    <property type="protein sequence ID" value="cds-PLY86770.1"/>
    <property type="gene ID" value="gene-LSAT_4X147760"/>
</dbReference>
<dbReference type="GeneID" id="3772789"/>
<dbReference type="Gramene" id="rna-gnl|WGS:NBSK|LSAT_1X5820_mrna">
    <property type="protein sequence ID" value="cds-PLY89787.1"/>
    <property type="gene ID" value="gene-LSAT_1X5820"/>
</dbReference>
<dbReference type="Gramene" id="rna-gnl|WGS:NBSK|LSAT_1X88101_mrna">
    <property type="protein sequence ID" value="cds-PLY71582.1"/>
    <property type="gene ID" value="gene-LSAT_1X88101"/>
</dbReference>
<dbReference type="Gramene" id="rna-gnl|WGS:NBSK|LSAT_4X147760_mrna">
    <property type="protein sequence ID" value="cds-PLY86770.1"/>
    <property type="gene ID" value="gene-LSAT_4X147760"/>
</dbReference>
<dbReference type="KEGG" id="lsv:3772789"/>
<dbReference type="OrthoDB" id="349at2759"/>
<dbReference type="GO" id="GO:0009535">
    <property type="term" value="C:chloroplast thylakoid membrane"/>
    <property type="evidence" value="ECO:0007669"/>
    <property type="project" value="UniProtKB-SubCell"/>
</dbReference>
<dbReference type="GO" id="GO:0009522">
    <property type="term" value="C:photosystem I"/>
    <property type="evidence" value="ECO:0007669"/>
    <property type="project" value="UniProtKB-KW"/>
</dbReference>
<dbReference type="GO" id="GO:0051539">
    <property type="term" value="F:4 iron, 4 sulfur cluster binding"/>
    <property type="evidence" value="ECO:0007669"/>
    <property type="project" value="UniProtKB-KW"/>
</dbReference>
<dbReference type="GO" id="GO:0016168">
    <property type="term" value="F:chlorophyll binding"/>
    <property type="evidence" value="ECO:0007669"/>
    <property type="project" value="UniProtKB-KW"/>
</dbReference>
<dbReference type="GO" id="GO:0009055">
    <property type="term" value="F:electron transfer activity"/>
    <property type="evidence" value="ECO:0007669"/>
    <property type="project" value="UniProtKB-UniRule"/>
</dbReference>
<dbReference type="GO" id="GO:0000287">
    <property type="term" value="F:magnesium ion binding"/>
    <property type="evidence" value="ECO:0007669"/>
    <property type="project" value="UniProtKB-UniRule"/>
</dbReference>
<dbReference type="GO" id="GO:0016491">
    <property type="term" value="F:oxidoreductase activity"/>
    <property type="evidence" value="ECO:0007669"/>
    <property type="project" value="UniProtKB-KW"/>
</dbReference>
<dbReference type="GO" id="GO:0015979">
    <property type="term" value="P:photosynthesis"/>
    <property type="evidence" value="ECO:0007669"/>
    <property type="project" value="UniProtKB-UniRule"/>
</dbReference>
<dbReference type="FunFam" id="1.20.1130.10:FF:000001">
    <property type="entry name" value="Photosystem I P700 chlorophyll a apoprotein A2"/>
    <property type="match status" value="1"/>
</dbReference>
<dbReference type="Gene3D" id="1.20.1130.10">
    <property type="entry name" value="Photosystem I PsaA/PsaB"/>
    <property type="match status" value="1"/>
</dbReference>
<dbReference type="HAMAP" id="MF_00482">
    <property type="entry name" value="PSI_PsaB"/>
    <property type="match status" value="1"/>
</dbReference>
<dbReference type="InterPro" id="IPR001280">
    <property type="entry name" value="PSI_PsaA/B"/>
</dbReference>
<dbReference type="InterPro" id="IPR020586">
    <property type="entry name" value="PSI_PsaA/B_CS"/>
</dbReference>
<dbReference type="InterPro" id="IPR036408">
    <property type="entry name" value="PSI_PsaA/B_sf"/>
</dbReference>
<dbReference type="InterPro" id="IPR006244">
    <property type="entry name" value="PSI_PsaB"/>
</dbReference>
<dbReference type="NCBIfam" id="TIGR01336">
    <property type="entry name" value="psaB"/>
    <property type="match status" value="1"/>
</dbReference>
<dbReference type="PANTHER" id="PTHR30128">
    <property type="entry name" value="OUTER MEMBRANE PROTEIN, OMPA-RELATED"/>
    <property type="match status" value="1"/>
</dbReference>
<dbReference type="PANTHER" id="PTHR30128:SF19">
    <property type="entry name" value="PHOTOSYSTEM I P700 CHLOROPHYLL A APOPROTEIN A1-RELATED"/>
    <property type="match status" value="1"/>
</dbReference>
<dbReference type="Pfam" id="PF00223">
    <property type="entry name" value="PsaA_PsaB"/>
    <property type="match status" value="1"/>
</dbReference>
<dbReference type="PIRSF" id="PIRSF002905">
    <property type="entry name" value="PSI_A"/>
    <property type="match status" value="1"/>
</dbReference>
<dbReference type="PRINTS" id="PR00257">
    <property type="entry name" value="PHOTSYSPSAAB"/>
</dbReference>
<dbReference type="SUPFAM" id="SSF81558">
    <property type="entry name" value="Photosystem I subunits PsaA/PsaB"/>
    <property type="match status" value="1"/>
</dbReference>
<dbReference type="PROSITE" id="PS00419">
    <property type="entry name" value="PHOTOSYSTEM_I_PSAAB"/>
    <property type="match status" value="1"/>
</dbReference>
<geneLocation type="chloroplast"/>
<reference key="1">
    <citation type="journal article" date="2006" name="Transgenic Res.">
        <title>Efficient and stable transformation of Lactuca sativa L. cv. Cisco (lettuce) plastids.</title>
        <authorList>
            <person name="Kanamoto H."/>
            <person name="Yamashita A."/>
            <person name="Asao H."/>
            <person name="Okumura S."/>
            <person name="Takase H."/>
            <person name="Hattori M."/>
            <person name="Yokota A."/>
            <person name="Tomizawa K."/>
        </authorList>
    </citation>
    <scope>NUCLEOTIDE SEQUENCE [LARGE SCALE GENOMIC DNA]</scope>
    <source>
        <strain>cv. Cisco</strain>
    </source>
</reference>
<reference key="2">
    <citation type="submission" date="2006-01" db="EMBL/GenBank/DDBJ databases">
        <title>A comparison of the first two published chloroplast genomes in Asteraceae: Lactuca and Helianthus.</title>
        <authorList>
            <person name="Timme R.E."/>
            <person name="Kuehl J.V."/>
            <person name="Boore J.L."/>
            <person name="Jansen R.K."/>
        </authorList>
    </citation>
    <scope>NUCLEOTIDE SEQUENCE [LARGE SCALE GENOMIC DNA]</scope>
    <source>
        <strain>cv. Salinas</strain>
    </source>
</reference>
<proteinExistence type="inferred from homology"/>
<keyword id="KW-0004">4Fe-4S</keyword>
<keyword id="KW-0148">Chlorophyll</keyword>
<keyword id="KW-0150">Chloroplast</keyword>
<keyword id="KW-0157">Chromophore</keyword>
<keyword id="KW-0249">Electron transport</keyword>
<keyword id="KW-0408">Iron</keyword>
<keyword id="KW-0411">Iron-sulfur</keyword>
<keyword id="KW-0460">Magnesium</keyword>
<keyword id="KW-0472">Membrane</keyword>
<keyword id="KW-0479">Metal-binding</keyword>
<keyword id="KW-0560">Oxidoreductase</keyword>
<keyword id="KW-0602">Photosynthesis</keyword>
<keyword id="KW-0603">Photosystem I</keyword>
<keyword id="KW-0934">Plastid</keyword>
<keyword id="KW-0793">Thylakoid</keyword>
<keyword id="KW-0812">Transmembrane</keyword>
<keyword id="KW-1133">Transmembrane helix</keyword>
<keyword id="KW-0813">Transport</keyword>